<accession>Q4P7F2</accession>
<accession>A0A0D1DZF0</accession>
<sequence>MSNDRNAQELLKWGLANSGSTGVASFASQSVEQISADIEAGRRPDLADPNLYNAIMGKSEAQMMAEELSVAIDTSRTLPDRMTALDNFEMLIEQIDNANNMTSMKMWSPIISLLSAPEAEIQTAAAWIIGTAVQNNDKAQMAVLDFHPVAALLDLLHSHVDEVRAKAMYALSGLLKHNPAAMHQFDQLDGWNMLNMALVDPNLGLRRKTAFLINALLLQDPNSLDSQPASTSTATAIAPVSFTPPTPTAPPAPLERGPETLRTSIPHPNVARALVQSNIINTLISSLLPAHTLPDTLSPPPTGANGDSDARLDLDFAEKSAAAILTFTTKLPPSPSHPLDPTTISLFKALLVQLQAKPLDSSDPASTRWAELGIHAHDFDQFKHKIHAL</sequence>
<gene>
    <name type="primary">FES1</name>
    <name type="ORF">UMAG_11735</name>
</gene>
<organism>
    <name type="scientific">Mycosarcoma maydis</name>
    <name type="common">Corn smut fungus</name>
    <name type="synonym">Ustilago maydis</name>
    <dbReference type="NCBI Taxonomy" id="5270"/>
    <lineage>
        <taxon>Eukaryota</taxon>
        <taxon>Fungi</taxon>
        <taxon>Dikarya</taxon>
        <taxon>Basidiomycota</taxon>
        <taxon>Ustilaginomycotina</taxon>
        <taxon>Ustilaginomycetes</taxon>
        <taxon>Ustilaginales</taxon>
        <taxon>Ustilaginaceae</taxon>
        <taxon>Mycosarcoma</taxon>
    </lineage>
</organism>
<dbReference type="EMBL" id="CM003150">
    <property type="protein sequence ID" value="KIS67910.1"/>
    <property type="molecule type" value="Genomic_DNA"/>
</dbReference>
<dbReference type="RefSeq" id="XP_011390573.1">
    <property type="nucleotide sequence ID" value="XM_011392271.1"/>
</dbReference>
<dbReference type="SMR" id="Q4P7F2"/>
<dbReference type="STRING" id="237631.Q4P7F2"/>
<dbReference type="EnsemblFungi" id="KIS67910">
    <property type="protein sequence ID" value="KIS67910"/>
    <property type="gene ID" value="UMAG_11735"/>
</dbReference>
<dbReference type="GeneID" id="23567586"/>
<dbReference type="KEGG" id="uma:UMAG_11735"/>
<dbReference type="VEuPathDB" id="FungiDB:UMAG_11735"/>
<dbReference type="HOGENOM" id="CLU_046722_0_1_1"/>
<dbReference type="InParanoid" id="Q4P7F2"/>
<dbReference type="OrthoDB" id="10250458at2759"/>
<dbReference type="Proteomes" id="UP000000561">
    <property type="component" value="Chromosome 11"/>
</dbReference>
<dbReference type="GO" id="GO:0005783">
    <property type="term" value="C:endoplasmic reticulum"/>
    <property type="evidence" value="ECO:0000318"/>
    <property type="project" value="GO_Central"/>
</dbReference>
<dbReference type="GO" id="GO:0000774">
    <property type="term" value="F:adenyl-nucleotide exchange factor activity"/>
    <property type="evidence" value="ECO:0000318"/>
    <property type="project" value="GO_Central"/>
</dbReference>
<dbReference type="GO" id="GO:0006417">
    <property type="term" value="P:regulation of translation"/>
    <property type="evidence" value="ECO:0007669"/>
    <property type="project" value="UniProtKB-KW"/>
</dbReference>
<dbReference type="Gene3D" id="1.25.10.10">
    <property type="entry name" value="Leucine-rich Repeat Variant"/>
    <property type="match status" value="1"/>
</dbReference>
<dbReference type="InterPro" id="IPR011989">
    <property type="entry name" value="ARM-like"/>
</dbReference>
<dbReference type="InterPro" id="IPR016024">
    <property type="entry name" value="ARM-type_fold"/>
</dbReference>
<dbReference type="InterPro" id="IPR050693">
    <property type="entry name" value="Hsp70_NEF-Inhibitors"/>
</dbReference>
<dbReference type="InterPro" id="IPR013918">
    <property type="entry name" value="Nucleotide_exch_fac_Fes1"/>
</dbReference>
<dbReference type="PANTHER" id="PTHR19316:SF18">
    <property type="entry name" value="HSP70-BINDING PROTEIN 1"/>
    <property type="match status" value="1"/>
</dbReference>
<dbReference type="PANTHER" id="PTHR19316">
    <property type="entry name" value="PROTEIN FOLDING REGULATOR"/>
    <property type="match status" value="1"/>
</dbReference>
<dbReference type="Pfam" id="PF08609">
    <property type="entry name" value="Fes1"/>
    <property type="match status" value="1"/>
</dbReference>
<dbReference type="SUPFAM" id="SSF48371">
    <property type="entry name" value="ARM repeat"/>
    <property type="match status" value="1"/>
</dbReference>
<comment type="function">
    <text evidence="1">Functions as a nucleotide exchange factor (NEF) for Hsp70 chaperones which accelerates the release of ADP. Required for fully efficient Hsp70-mediated folding of proteins (By similarity).</text>
</comment>
<comment type="subcellular location">
    <subcellularLocation>
        <location evidence="1">Cytoplasm</location>
    </subcellularLocation>
</comment>
<comment type="similarity">
    <text evidence="4">Belongs to the FES1 family.</text>
</comment>
<name>FES1_MYCMD</name>
<protein>
    <recommendedName>
        <fullName>Hsp70 nucleotide exchange factor FES1</fullName>
    </recommendedName>
</protein>
<keyword id="KW-0963">Cytoplasm</keyword>
<keyword id="KW-1185">Reference proteome</keyword>
<keyword id="KW-0677">Repeat</keyword>
<keyword id="KW-0810">Translation regulation</keyword>
<reference key="1">
    <citation type="journal article" date="2006" name="Nature">
        <title>Insights from the genome of the biotrophic fungal plant pathogen Ustilago maydis.</title>
        <authorList>
            <person name="Kaemper J."/>
            <person name="Kahmann R."/>
            <person name="Boelker M."/>
            <person name="Ma L.-J."/>
            <person name="Brefort T."/>
            <person name="Saville B.J."/>
            <person name="Banuett F."/>
            <person name="Kronstad J.W."/>
            <person name="Gold S.E."/>
            <person name="Mueller O."/>
            <person name="Perlin M.H."/>
            <person name="Woesten H.A.B."/>
            <person name="de Vries R."/>
            <person name="Ruiz-Herrera J."/>
            <person name="Reynaga-Pena C.G."/>
            <person name="Snetselaar K."/>
            <person name="McCann M."/>
            <person name="Perez-Martin J."/>
            <person name="Feldbruegge M."/>
            <person name="Basse C.W."/>
            <person name="Steinberg G."/>
            <person name="Ibeas J.I."/>
            <person name="Holloman W."/>
            <person name="Guzman P."/>
            <person name="Farman M.L."/>
            <person name="Stajich J.E."/>
            <person name="Sentandreu R."/>
            <person name="Gonzalez-Prieto J.M."/>
            <person name="Kennell J.C."/>
            <person name="Molina L."/>
            <person name="Schirawski J."/>
            <person name="Mendoza-Mendoza A."/>
            <person name="Greilinger D."/>
            <person name="Muench K."/>
            <person name="Roessel N."/>
            <person name="Scherer M."/>
            <person name="Vranes M."/>
            <person name="Ladendorf O."/>
            <person name="Vincon V."/>
            <person name="Fuchs U."/>
            <person name="Sandrock B."/>
            <person name="Meng S."/>
            <person name="Ho E.C.H."/>
            <person name="Cahill M.J."/>
            <person name="Boyce K.J."/>
            <person name="Klose J."/>
            <person name="Klosterman S.J."/>
            <person name="Deelstra H.J."/>
            <person name="Ortiz-Castellanos L."/>
            <person name="Li W."/>
            <person name="Sanchez-Alonso P."/>
            <person name="Schreier P.H."/>
            <person name="Haeuser-Hahn I."/>
            <person name="Vaupel M."/>
            <person name="Koopmann E."/>
            <person name="Friedrich G."/>
            <person name="Voss H."/>
            <person name="Schlueter T."/>
            <person name="Margolis J."/>
            <person name="Platt D."/>
            <person name="Swimmer C."/>
            <person name="Gnirke A."/>
            <person name="Chen F."/>
            <person name="Vysotskaia V."/>
            <person name="Mannhaupt G."/>
            <person name="Gueldener U."/>
            <person name="Muensterkoetter M."/>
            <person name="Haase D."/>
            <person name="Oesterheld M."/>
            <person name="Mewes H.-W."/>
            <person name="Mauceli E.W."/>
            <person name="DeCaprio D."/>
            <person name="Wade C.M."/>
            <person name="Butler J."/>
            <person name="Young S.K."/>
            <person name="Jaffe D.B."/>
            <person name="Calvo S.E."/>
            <person name="Nusbaum C."/>
            <person name="Galagan J.E."/>
            <person name="Birren B.W."/>
        </authorList>
    </citation>
    <scope>NUCLEOTIDE SEQUENCE [LARGE SCALE GENOMIC DNA]</scope>
    <source>
        <strain>DSM 14603 / FGSC 9021 / UM521</strain>
    </source>
</reference>
<reference key="2">
    <citation type="submission" date="2014-09" db="EMBL/GenBank/DDBJ databases">
        <authorList>
            <person name="Gueldener U."/>
            <person name="Muensterkoetter M."/>
            <person name="Walter M.C."/>
            <person name="Mannhaupt G."/>
            <person name="Kahmann R."/>
        </authorList>
    </citation>
    <scope>GENOME REANNOTATION</scope>
    <source>
        <strain>DSM 14603 / FGSC 9021 / UM521</strain>
    </source>
</reference>
<proteinExistence type="inferred from homology"/>
<feature type="chain" id="PRO_0000285402" description="Hsp70 nucleotide exchange factor FES1">
    <location>
        <begin position="1"/>
        <end position="389"/>
    </location>
</feature>
<feature type="repeat" description="ARM 1" evidence="2">
    <location>
        <begin position="95"/>
        <end position="134"/>
    </location>
</feature>
<feature type="repeat" description="ARM 2" evidence="2">
    <location>
        <begin position="137"/>
        <end position="176"/>
    </location>
</feature>
<feature type="repeat" description="ARM 3" evidence="2">
    <location>
        <begin position="179"/>
        <end position="218"/>
    </location>
</feature>
<feature type="repeat" description="ARM 4" evidence="2">
    <location>
        <begin position="268"/>
        <end position="310"/>
    </location>
</feature>
<feature type="region of interest" description="Disordered" evidence="3">
    <location>
        <begin position="223"/>
        <end position="255"/>
    </location>
</feature>
<feature type="compositionally biased region" description="Pro residues" evidence="3">
    <location>
        <begin position="242"/>
        <end position="253"/>
    </location>
</feature>
<evidence type="ECO:0000250" key="1"/>
<evidence type="ECO:0000255" key="2"/>
<evidence type="ECO:0000256" key="3">
    <source>
        <dbReference type="SAM" id="MobiDB-lite"/>
    </source>
</evidence>
<evidence type="ECO:0000305" key="4"/>